<proteinExistence type="evidence at transcript level"/>
<reference key="1">
    <citation type="journal article" date="2004" name="Nat. Genet.">
        <title>Complete sequencing and characterization of 21,243 full-length human cDNAs.</title>
        <authorList>
            <person name="Ota T."/>
            <person name="Suzuki Y."/>
            <person name="Nishikawa T."/>
            <person name="Otsuki T."/>
            <person name="Sugiyama T."/>
            <person name="Irie R."/>
            <person name="Wakamatsu A."/>
            <person name="Hayashi K."/>
            <person name="Sato H."/>
            <person name="Nagai K."/>
            <person name="Kimura K."/>
            <person name="Makita H."/>
            <person name="Sekine M."/>
            <person name="Obayashi M."/>
            <person name="Nishi T."/>
            <person name="Shibahara T."/>
            <person name="Tanaka T."/>
            <person name="Ishii S."/>
            <person name="Yamamoto J."/>
            <person name="Saito K."/>
            <person name="Kawai Y."/>
            <person name="Isono Y."/>
            <person name="Nakamura Y."/>
            <person name="Nagahari K."/>
            <person name="Murakami K."/>
            <person name="Yasuda T."/>
            <person name="Iwayanagi T."/>
            <person name="Wagatsuma M."/>
            <person name="Shiratori A."/>
            <person name="Sudo H."/>
            <person name="Hosoiri T."/>
            <person name="Kaku Y."/>
            <person name="Kodaira H."/>
            <person name="Kondo H."/>
            <person name="Sugawara M."/>
            <person name="Takahashi M."/>
            <person name="Kanda K."/>
            <person name="Yokoi T."/>
            <person name="Furuya T."/>
            <person name="Kikkawa E."/>
            <person name="Omura Y."/>
            <person name="Abe K."/>
            <person name="Kamihara K."/>
            <person name="Katsuta N."/>
            <person name="Sato K."/>
            <person name="Tanikawa M."/>
            <person name="Yamazaki M."/>
            <person name="Ninomiya K."/>
            <person name="Ishibashi T."/>
            <person name="Yamashita H."/>
            <person name="Murakawa K."/>
            <person name="Fujimori K."/>
            <person name="Tanai H."/>
            <person name="Kimata M."/>
            <person name="Watanabe M."/>
            <person name="Hiraoka S."/>
            <person name="Chiba Y."/>
            <person name="Ishida S."/>
            <person name="Ono Y."/>
            <person name="Takiguchi S."/>
            <person name="Watanabe S."/>
            <person name="Yosida M."/>
            <person name="Hotuta T."/>
            <person name="Kusano J."/>
            <person name="Kanehori K."/>
            <person name="Takahashi-Fujii A."/>
            <person name="Hara H."/>
            <person name="Tanase T.-O."/>
            <person name="Nomura Y."/>
            <person name="Togiya S."/>
            <person name="Komai F."/>
            <person name="Hara R."/>
            <person name="Takeuchi K."/>
            <person name="Arita M."/>
            <person name="Imose N."/>
            <person name="Musashino K."/>
            <person name="Yuuki H."/>
            <person name="Oshima A."/>
            <person name="Sasaki N."/>
            <person name="Aotsuka S."/>
            <person name="Yoshikawa Y."/>
            <person name="Matsunawa H."/>
            <person name="Ichihara T."/>
            <person name="Shiohata N."/>
            <person name="Sano S."/>
            <person name="Moriya S."/>
            <person name="Momiyama H."/>
            <person name="Satoh N."/>
            <person name="Takami S."/>
            <person name="Terashima Y."/>
            <person name="Suzuki O."/>
            <person name="Nakagawa S."/>
            <person name="Senoh A."/>
            <person name="Mizoguchi H."/>
            <person name="Goto Y."/>
            <person name="Shimizu F."/>
            <person name="Wakebe H."/>
            <person name="Hishigaki H."/>
            <person name="Watanabe T."/>
            <person name="Sugiyama A."/>
            <person name="Takemoto M."/>
            <person name="Kawakami B."/>
            <person name="Yamazaki M."/>
            <person name="Watanabe K."/>
            <person name="Kumagai A."/>
            <person name="Itakura S."/>
            <person name="Fukuzumi Y."/>
            <person name="Fujimori Y."/>
            <person name="Komiyama M."/>
            <person name="Tashiro H."/>
            <person name="Tanigami A."/>
            <person name="Fujiwara T."/>
            <person name="Ono T."/>
            <person name="Yamada K."/>
            <person name="Fujii Y."/>
            <person name="Ozaki K."/>
            <person name="Hirao M."/>
            <person name="Ohmori Y."/>
            <person name="Kawabata A."/>
            <person name="Hikiji T."/>
            <person name="Kobatake N."/>
            <person name="Inagaki H."/>
            <person name="Ikema Y."/>
            <person name="Okamoto S."/>
            <person name="Okitani R."/>
            <person name="Kawakami T."/>
            <person name="Noguchi S."/>
            <person name="Itoh T."/>
            <person name="Shigeta K."/>
            <person name="Senba T."/>
            <person name="Matsumura K."/>
            <person name="Nakajima Y."/>
            <person name="Mizuno T."/>
            <person name="Morinaga M."/>
            <person name="Sasaki M."/>
            <person name="Togashi T."/>
            <person name="Oyama M."/>
            <person name="Hata H."/>
            <person name="Watanabe M."/>
            <person name="Komatsu T."/>
            <person name="Mizushima-Sugano J."/>
            <person name="Satoh T."/>
            <person name="Shirai Y."/>
            <person name="Takahashi Y."/>
            <person name="Nakagawa K."/>
            <person name="Okumura K."/>
            <person name="Nagase T."/>
            <person name="Nomura N."/>
            <person name="Kikuchi H."/>
            <person name="Masuho Y."/>
            <person name="Yamashita R."/>
            <person name="Nakai K."/>
            <person name="Yada T."/>
            <person name="Nakamura Y."/>
            <person name="Ohara O."/>
            <person name="Isogai T."/>
            <person name="Sugano S."/>
        </authorList>
    </citation>
    <scope>NUCLEOTIDE SEQUENCE [LARGE SCALE MRNA]</scope>
    <source>
        <tissue>Testis</tissue>
    </source>
</reference>
<reference key="2">
    <citation type="journal article" date="2005" name="Nature">
        <title>Generation and annotation of the DNA sequences of human chromosomes 2 and 4.</title>
        <authorList>
            <person name="Hillier L.W."/>
            <person name="Graves T.A."/>
            <person name="Fulton R.S."/>
            <person name="Fulton L.A."/>
            <person name="Pepin K.H."/>
            <person name="Minx P."/>
            <person name="Wagner-McPherson C."/>
            <person name="Layman D."/>
            <person name="Wylie K."/>
            <person name="Sekhon M."/>
            <person name="Becker M.C."/>
            <person name="Fewell G.A."/>
            <person name="Delehaunty K.D."/>
            <person name="Miner T.L."/>
            <person name="Nash W.E."/>
            <person name="Kremitzki C."/>
            <person name="Oddy L."/>
            <person name="Du H."/>
            <person name="Sun H."/>
            <person name="Bradshaw-Cordum H."/>
            <person name="Ali J."/>
            <person name="Carter J."/>
            <person name="Cordes M."/>
            <person name="Harris A."/>
            <person name="Isak A."/>
            <person name="van Brunt A."/>
            <person name="Nguyen C."/>
            <person name="Du F."/>
            <person name="Courtney L."/>
            <person name="Kalicki J."/>
            <person name="Ozersky P."/>
            <person name="Abbott S."/>
            <person name="Armstrong J."/>
            <person name="Belter E.A."/>
            <person name="Caruso L."/>
            <person name="Cedroni M."/>
            <person name="Cotton M."/>
            <person name="Davidson T."/>
            <person name="Desai A."/>
            <person name="Elliott G."/>
            <person name="Erb T."/>
            <person name="Fronick C."/>
            <person name="Gaige T."/>
            <person name="Haakenson W."/>
            <person name="Haglund K."/>
            <person name="Holmes A."/>
            <person name="Harkins R."/>
            <person name="Kim K."/>
            <person name="Kruchowski S.S."/>
            <person name="Strong C.M."/>
            <person name="Grewal N."/>
            <person name="Goyea E."/>
            <person name="Hou S."/>
            <person name="Levy A."/>
            <person name="Martinka S."/>
            <person name="Mead K."/>
            <person name="McLellan M.D."/>
            <person name="Meyer R."/>
            <person name="Randall-Maher J."/>
            <person name="Tomlinson C."/>
            <person name="Dauphin-Kohlberg S."/>
            <person name="Kozlowicz-Reilly A."/>
            <person name="Shah N."/>
            <person name="Swearengen-Shahid S."/>
            <person name="Snider J."/>
            <person name="Strong J.T."/>
            <person name="Thompson J."/>
            <person name="Yoakum M."/>
            <person name="Leonard S."/>
            <person name="Pearman C."/>
            <person name="Trani L."/>
            <person name="Radionenko M."/>
            <person name="Waligorski J.E."/>
            <person name="Wang C."/>
            <person name="Rock S.M."/>
            <person name="Tin-Wollam A.-M."/>
            <person name="Maupin R."/>
            <person name="Latreille P."/>
            <person name="Wendl M.C."/>
            <person name="Yang S.-P."/>
            <person name="Pohl C."/>
            <person name="Wallis J.W."/>
            <person name="Spieth J."/>
            <person name="Bieri T.A."/>
            <person name="Berkowicz N."/>
            <person name="Nelson J.O."/>
            <person name="Osborne J."/>
            <person name="Ding L."/>
            <person name="Meyer R."/>
            <person name="Sabo A."/>
            <person name="Shotland Y."/>
            <person name="Sinha P."/>
            <person name="Wohldmann P.E."/>
            <person name="Cook L.L."/>
            <person name="Hickenbotham M.T."/>
            <person name="Eldred J."/>
            <person name="Williams D."/>
            <person name="Jones T.A."/>
            <person name="She X."/>
            <person name="Ciccarelli F.D."/>
            <person name="Izaurralde E."/>
            <person name="Taylor J."/>
            <person name="Schmutz J."/>
            <person name="Myers R.M."/>
            <person name="Cox D.R."/>
            <person name="Huang X."/>
            <person name="McPherson J.D."/>
            <person name="Mardis E.R."/>
            <person name="Clifton S.W."/>
            <person name="Warren W.C."/>
            <person name="Chinwalla A.T."/>
            <person name="Eddy S.R."/>
            <person name="Marra M.A."/>
            <person name="Ovcharenko I."/>
            <person name="Furey T.S."/>
            <person name="Miller W."/>
            <person name="Eichler E.E."/>
            <person name="Bork P."/>
            <person name="Suyama M."/>
            <person name="Torrents D."/>
            <person name="Waterston R.H."/>
            <person name="Wilson R.K."/>
        </authorList>
    </citation>
    <scope>NUCLEOTIDE SEQUENCE [LARGE SCALE GENOMIC DNA]</scope>
</reference>
<sequence length="585" mass="67839">MELLTFRDVAIEFSPEEWKCLDPAQQNLYRDVMLENYRNLISLGVAISNPDLVIYLEQRKEPYKVKIHETVAKHPAVCSHFTQDFLPVQGIEDSFHKLILRRYEKCGHENLELRKSCKRKVQKGGYNEFNQCLSTIQSKIFQCNVHVKVFSTFSNSNQRRIRHTGEKHFKECGKSFQKFSDLTQHQGIHAGEKPYTCEECGKDFKWYLIFNEYEIIHTGEKPFTCEECGNIFTTSSNFAKHKVHTGEKSYKYEECGKAFNRSSTLTKHKRIHAEEKPFTCEECGKIITSSSNVAKHKKIHTGEKLYKCQECGKVFNRSTTLTKHNRIHTGEKPYTCEECGKAFSRSSVLNEHKRIHTGEKPYKCEQCGKAFRQSATLNKHKSIHTGEKPYTCEECGKAFSRFTTLNEHKRIHTGERPHKCEECGKAFGWSTDLNKHKIIHTGEKPYKCEECGKAFGWSAYLSKHKKIHTGEKPYRCEECGKAFLCSRALNKHKTIHTGEKPYECEECGKAFGWSTYLSKHKKIHTGEKPYRCEECGKAFRRSRVLNKYKTIHTGDKTPKCKGCGKAFKWSSYLNQHNKIYTGEKL</sequence>
<evidence type="ECO:0000250" key="1"/>
<evidence type="ECO:0000255" key="2">
    <source>
        <dbReference type="PROSITE-ProRule" id="PRU00042"/>
    </source>
</evidence>
<evidence type="ECO:0000255" key="3">
    <source>
        <dbReference type="PROSITE-ProRule" id="PRU00119"/>
    </source>
</evidence>
<evidence type="ECO:0000305" key="4"/>
<protein>
    <recommendedName>
        <fullName>Zinc finger protein 732</fullName>
    </recommendedName>
</protein>
<organism>
    <name type="scientific">Homo sapiens</name>
    <name type="common">Human</name>
    <dbReference type="NCBI Taxonomy" id="9606"/>
    <lineage>
        <taxon>Eukaryota</taxon>
        <taxon>Metazoa</taxon>
        <taxon>Chordata</taxon>
        <taxon>Craniata</taxon>
        <taxon>Vertebrata</taxon>
        <taxon>Euteleostomi</taxon>
        <taxon>Mammalia</taxon>
        <taxon>Eutheria</taxon>
        <taxon>Euarchontoglires</taxon>
        <taxon>Primates</taxon>
        <taxon>Haplorrhini</taxon>
        <taxon>Catarrhini</taxon>
        <taxon>Hominidae</taxon>
        <taxon>Homo</taxon>
    </lineage>
</organism>
<name>ZN732_HUMAN</name>
<comment type="function">
    <text evidence="1">May be involved in transcriptional regulation.</text>
</comment>
<comment type="subcellular location">
    <subcellularLocation>
        <location evidence="4">Nucleus</location>
    </subcellularLocation>
</comment>
<comment type="similarity">
    <text evidence="4">Belongs to the krueppel C2H2-type zinc-finger protein family.</text>
</comment>
<feature type="chain" id="PRO_0000382922" description="Zinc finger protein 732">
    <location>
        <begin position="1"/>
        <end position="585"/>
    </location>
</feature>
<feature type="domain" description="KRAB" evidence="3">
    <location>
        <begin position="4"/>
        <end position="75"/>
    </location>
</feature>
<feature type="zinc finger region" description="C2H2-type 1; degenerate" evidence="2">
    <location>
        <begin position="141"/>
        <end position="163"/>
    </location>
</feature>
<feature type="zinc finger region" description="C2H2-type 2; degenerate" evidence="2">
    <location>
        <begin position="167"/>
        <end position="189"/>
    </location>
</feature>
<feature type="zinc finger region" description="C2H2-type 3; degenerate" evidence="2">
    <location>
        <begin position="195"/>
        <end position="217"/>
    </location>
</feature>
<feature type="zinc finger region" description="C2H2-type 4" evidence="2">
    <location>
        <begin position="223"/>
        <end position="244"/>
    </location>
</feature>
<feature type="zinc finger region" description="C2H2-type 5; degenerate" evidence="2">
    <location>
        <begin position="250"/>
        <end position="272"/>
    </location>
</feature>
<feature type="zinc finger region" description="C2H2-type 6" evidence="2">
    <location>
        <begin position="278"/>
        <end position="300"/>
    </location>
</feature>
<feature type="zinc finger region" description="C2H2-type 7" evidence="2">
    <location>
        <begin position="306"/>
        <end position="328"/>
    </location>
</feature>
<feature type="zinc finger region" description="C2H2-type 8" evidence="2">
    <location>
        <begin position="334"/>
        <end position="356"/>
    </location>
</feature>
<feature type="zinc finger region" description="C2H2-type 9" evidence="2">
    <location>
        <begin position="362"/>
        <end position="384"/>
    </location>
</feature>
<feature type="zinc finger region" description="C2H2-type 10" evidence="2">
    <location>
        <begin position="390"/>
        <end position="412"/>
    </location>
</feature>
<feature type="zinc finger region" description="C2H2-type 11" evidence="2">
    <location>
        <begin position="418"/>
        <end position="440"/>
    </location>
</feature>
<feature type="zinc finger region" description="C2H2-type 12" evidence="2">
    <location>
        <begin position="446"/>
        <end position="468"/>
    </location>
</feature>
<feature type="zinc finger region" description="C2H2-type 13" evidence="2">
    <location>
        <begin position="474"/>
        <end position="496"/>
    </location>
</feature>
<feature type="zinc finger region" description="C2H2-type 14" evidence="2">
    <location>
        <begin position="502"/>
        <end position="524"/>
    </location>
</feature>
<feature type="zinc finger region" description="C2H2-type 15; degenerate" evidence="2">
    <location>
        <begin position="530"/>
        <end position="552"/>
    </location>
</feature>
<feature type="zinc finger region" description="C2H2-type 16; degenerate" evidence="2">
    <location>
        <begin position="558"/>
        <end position="580"/>
    </location>
</feature>
<dbReference type="EMBL" id="AK302099">
    <property type="protein sequence ID" value="BAG63481.1"/>
    <property type="molecule type" value="mRNA"/>
</dbReference>
<dbReference type="EMBL" id="AC079140">
    <property type="status" value="NOT_ANNOTATED_CDS"/>
    <property type="molecule type" value="Genomic_DNA"/>
</dbReference>
<dbReference type="CCDS" id="CCDS46990.1"/>
<dbReference type="RefSeq" id="NP_001131080.1">
    <property type="nucleotide sequence ID" value="NM_001137608.3"/>
</dbReference>
<dbReference type="SMR" id="B4DXR9"/>
<dbReference type="BioGRID" id="576318">
    <property type="interactions" value="3"/>
</dbReference>
<dbReference type="FunCoup" id="B4DXR9">
    <property type="interactions" value="36"/>
</dbReference>
<dbReference type="IntAct" id="B4DXR9">
    <property type="interactions" value="3"/>
</dbReference>
<dbReference type="STRING" id="9606.ENSP00000415774"/>
<dbReference type="iPTMnet" id="B4DXR9"/>
<dbReference type="PhosphoSitePlus" id="B4DXR9"/>
<dbReference type="BioMuta" id="ZNF732"/>
<dbReference type="jPOST" id="B4DXR9"/>
<dbReference type="MassIVE" id="B4DXR9"/>
<dbReference type="PaxDb" id="9606-ENSP00000415774"/>
<dbReference type="PeptideAtlas" id="B4DXR9"/>
<dbReference type="ProteomicsDB" id="5464"/>
<dbReference type="Antibodypedia" id="76504">
    <property type="antibodies" value="5 antibodies from 3 providers"/>
</dbReference>
<dbReference type="DNASU" id="654254"/>
<dbReference type="Ensembl" id="ENST00000419098.6">
    <property type="protein sequence ID" value="ENSP00000415774.1"/>
    <property type="gene ID" value="ENSG00000186777.13"/>
</dbReference>
<dbReference type="GeneID" id="654254"/>
<dbReference type="KEGG" id="hsa:654254"/>
<dbReference type="MANE-Select" id="ENST00000419098.6">
    <property type="protein sequence ID" value="ENSP00000415774.1"/>
    <property type="RefSeq nucleotide sequence ID" value="NM_001137608.3"/>
    <property type="RefSeq protein sequence ID" value="NP_001131080.1"/>
</dbReference>
<dbReference type="UCSC" id="uc062udf.1">
    <property type="organism name" value="human"/>
</dbReference>
<dbReference type="AGR" id="HGNC:37138"/>
<dbReference type="CTD" id="654254"/>
<dbReference type="GeneCards" id="ZNF732"/>
<dbReference type="HGNC" id="HGNC:37138">
    <property type="gene designation" value="ZNF732"/>
</dbReference>
<dbReference type="HPA" id="ENSG00000186777">
    <property type="expression patterns" value="Low tissue specificity"/>
</dbReference>
<dbReference type="neXtProt" id="NX_B4DXR9"/>
<dbReference type="OpenTargets" id="ENSG00000186777"/>
<dbReference type="PharmGKB" id="PA162410265"/>
<dbReference type="VEuPathDB" id="HostDB:ENSG00000186777"/>
<dbReference type="eggNOG" id="KOG1721">
    <property type="taxonomic scope" value="Eukaryota"/>
</dbReference>
<dbReference type="GeneTree" id="ENSGT00940000161765"/>
<dbReference type="HOGENOM" id="CLU_002678_0_10_1"/>
<dbReference type="InParanoid" id="B4DXR9"/>
<dbReference type="OMA" id="CKKCFSH"/>
<dbReference type="OrthoDB" id="1095242at2759"/>
<dbReference type="PAN-GO" id="B4DXR9">
    <property type="GO annotations" value="3 GO annotations based on evolutionary models"/>
</dbReference>
<dbReference type="PhylomeDB" id="B4DXR9"/>
<dbReference type="TreeFam" id="TF342117"/>
<dbReference type="PathwayCommons" id="B4DXR9"/>
<dbReference type="Reactome" id="R-HSA-212436">
    <property type="pathway name" value="Generic Transcription Pathway"/>
</dbReference>
<dbReference type="SignaLink" id="B4DXR9"/>
<dbReference type="BioGRID-ORCS" id="654254">
    <property type="hits" value="10 hits in 1073 CRISPR screens"/>
</dbReference>
<dbReference type="ChiTaRS" id="ZNF732">
    <property type="organism name" value="human"/>
</dbReference>
<dbReference type="GenomeRNAi" id="654254"/>
<dbReference type="Pharos" id="B4DXR9">
    <property type="development level" value="Tdark"/>
</dbReference>
<dbReference type="PRO" id="PR:B4DXR9"/>
<dbReference type="Proteomes" id="UP000005640">
    <property type="component" value="Chromosome 4"/>
</dbReference>
<dbReference type="RNAct" id="B4DXR9">
    <property type="molecule type" value="protein"/>
</dbReference>
<dbReference type="Bgee" id="ENSG00000186777">
    <property type="expression patterns" value="Expressed in primordial germ cell in gonad and 91 other cell types or tissues"/>
</dbReference>
<dbReference type="ExpressionAtlas" id="B4DXR9">
    <property type="expression patterns" value="baseline and differential"/>
</dbReference>
<dbReference type="GO" id="GO:0005634">
    <property type="term" value="C:nucleus"/>
    <property type="evidence" value="ECO:0007669"/>
    <property type="project" value="UniProtKB-SubCell"/>
</dbReference>
<dbReference type="GO" id="GO:0000981">
    <property type="term" value="F:DNA-binding transcription factor activity, RNA polymerase II-specific"/>
    <property type="evidence" value="ECO:0000318"/>
    <property type="project" value="GO_Central"/>
</dbReference>
<dbReference type="GO" id="GO:0000978">
    <property type="term" value="F:RNA polymerase II cis-regulatory region sequence-specific DNA binding"/>
    <property type="evidence" value="ECO:0000318"/>
    <property type="project" value="GO_Central"/>
</dbReference>
<dbReference type="GO" id="GO:0008270">
    <property type="term" value="F:zinc ion binding"/>
    <property type="evidence" value="ECO:0007669"/>
    <property type="project" value="UniProtKB-KW"/>
</dbReference>
<dbReference type="GO" id="GO:0006355">
    <property type="term" value="P:regulation of DNA-templated transcription"/>
    <property type="evidence" value="ECO:0000318"/>
    <property type="project" value="GO_Central"/>
</dbReference>
<dbReference type="CDD" id="cd07765">
    <property type="entry name" value="KRAB_A-box"/>
    <property type="match status" value="1"/>
</dbReference>
<dbReference type="FunFam" id="3.30.160.60:FF:001370">
    <property type="entry name" value="Zinc finger protein"/>
    <property type="match status" value="1"/>
</dbReference>
<dbReference type="FunFam" id="3.30.160.60:FF:000034">
    <property type="entry name" value="zinc finger protein 25"/>
    <property type="match status" value="4"/>
</dbReference>
<dbReference type="FunFam" id="3.30.160.60:FF:001408">
    <property type="entry name" value="Zinc finger protein 260"/>
    <property type="match status" value="1"/>
</dbReference>
<dbReference type="FunFam" id="3.30.160.60:FF:001868">
    <property type="entry name" value="Zinc finger protein 264"/>
    <property type="match status" value="1"/>
</dbReference>
<dbReference type="FunFam" id="3.30.160.60:FF:001934">
    <property type="entry name" value="Zinc finger protein 430"/>
    <property type="match status" value="1"/>
</dbReference>
<dbReference type="FunFam" id="3.30.160.60:FF:002254">
    <property type="entry name" value="Zinc finger protein 540"/>
    <property type="match status" value="1"/>
</dbReference>
<dbReference type="FunFam" id="3.30.160.60:FF:000362">
    <property type="entry name" value="Zinc finger protein 606"/>
    <property type="match status" value="3"/>
</dbReference>
<dbReference type="FunFam" id="3.30.160.60:FF:002541">
    <property type="entry name" value="Zinc finger protein 732"/>
    <property type="match status" value="1"/>
</dbReference>
<dbReference type="FunFam" id="3.30.160.60:FF:002610">
    <property type="entry name" value="Zinc finger protein 732"/>
    <property type="match status" value="1"/>
</dbReference>
<dbReference type="FunFam" id="3.30.160.60:FF:002705">
    <property type="entry name" value="Zinc finger protein 732"/>
    <property type="match status" value="1"/>
</dbReference>
<dbReference type="Gene3D" id="6.10.140.140">
    <property type="match status" value="1"/>
</dbReference>
<dbReference type="Gene3D" id="3.30.160.60">
    <property type="entry name" value="Classic Zinc Finger"/>
    <property type="match status" value="15"/>
</dbReference>
<dbReference type="InterPro" id="IPR001909">
    <property type="entry name" value="KRAB"/>
</dbReference>
<dbReference type="InterPro" id="IPR036051">
    <property type="entry name" value="KRAB_dom_sf"/>
</dbReference>
<dbReference type="InterPro" id="IPR036236">
    <property type="entry name" value="Znf_C2H2_sf"/>
</dbReference>
<dbReference type="InterPro" id="IPR013087">
    <property type="entry name" value="Znf_C2H2_type"/>
</dbReference>
<dbReference type="PANTHER" id="PTHR23226:SF313">
    <property type="entry name" value="C2H2-TYPE DOMAIN-CONTAINING PROTEIN-RELATED"/>
    <property type="match status" value="1"/>
</dbReference>
<dbReference type="PANTHER" id="PTHR23226">
    <property type="entry name" value="ZINC FINGER AND SCAN DOMAIN-CONTAINING"/>
    <property type="match status" value="1"/>
</dbReference>
<dbReference type="Pfam" id="PF01352">
    <property type="entry name" value="KRAB"/>
    <property type="match status" value="1"/>
</dbReference>
<dbReference type="Pfam" id="PF00096">
    <property type="entry name" value="zf-C2H2"/>
    <property type="match status" value="8"/>
</dbReference>
<dbReference type="Pfam" id="PF13912">
    <property type="entry name" value="zf-C2H2_6"/>
    <property type="match status" value="1"/>
</dbReference>
<dbReference type="SMART" id="SM00349">
    <property type="entry name" value="KRAB"/>
    <property type="match status" value="1"/>
</dbReference>
<dbReference type="SMART" id="SM00355">
    <property type="entry name" value="ZnF_C2H2"/>
    <property type="match status" value="15"/>
</dbReference>
<dbReference type="SUPFAM" id="SSF57667">
    <property type="entry name" value="beta-beta-alpha zinc fingers"/>
    <property type="match status" value="8"/>
</dbReference>
<dbReference type="SUPFAM" id="SSF109640">
    <property type="entry name" value="KRAB domain (Kruppel-associated box)"/>
    <property type="match status" value="1"/>
</dbReference>
<dbReference type="PROSITE" id="PS50805">
    <property type="entry name" value="KRAB"/>
    <property type="match status" value="1"/>
</dbReference>
<dbReference type="PROSITE" id="PS00028">
    <property type="entry name" value="ZINC_FINGER_C2H2_1"/>
    <property type="match status" value="9"/>
</dbReference>
<dbReference type="PROSITE" id="PS50157">
    <property type="entry name" value="ZINC_FINGER_C2H2_2"/>
    <property type="match status" value="15"/>
</dbReference>
<accession>B4DXR9</accession>
<keyword id="KW-0238">DNA-binding</keyword>
<keyword id="KW-0479">Metal-binding</keyword>
<keyword id="KW-0539">Nucleus</keyword>
<keyword id="KW-1185">Reference proteome</keyword>
<keyword id="KW-0677">Repeat</keyword>
<keyword id="KW-0804">Transcription</keyword>
<keyword id="KW-0805">Transcription regulation</keyword>
<keyword id="KW-0862">Zinc</keyword>
<keyword id="KW-0863">Zinc-finger</keyword>
<gene>
    <name type="primary">ZNF732</name>
</gene>